<comment type="function">
    <text evidence="1">Produces ATP from ADP in the presence of a proton gradient across the membrane.</text>
</comment>
<comment type="subunit">
    <text evidence="1">F-type ATPases have 2 components, CF(1) - the catalytic core - and CF(0) - the membrane proton channel. CF(1) has five subunits: alpha(3), beta(3), gamma(1), delta(1), epsilon(1). CF(0) has three main subunits: a, b and c.</text>
</comment>
<comment type="subcellular location">
    <subcellularLocation>
        <location evidence="1">Cell inner membrane</location>
        <topology evidence="1">Peripheral membrane protein</topology>
    </subcellularLocation>
</comment>
<comment type="similarity">
    <text evidence="1">Belongs to the ATPase epsilon chain family.</text>
</comment>
<reference key="1">
    <citation type="journal article" date="2007" name="PLoS ONE">
        <title>The complete genome sequence and analysis of the Epsilonproteobacterium Arcobacter butzleri.</title>
        <authorList>
            <person name="Miller W.G."/>
            <person name="Parker C.T."/>
            <person name="Rubenfield M."/>
            <person name="Mendz G.L."/>
            <person name="Woesten M.M.S.M."/>
            <person name="Ussery D.W."/>
            <person name="Stolz J.F."/>
            <person name="Binnewies T.T."/>
            <person name="Hallin P.F."/>
            <person name="Wang G."/>
            <person name="Malek J.A."/>
            <person name="Rogosin A."/>
            <person name="Stanker L.H."/>
            <person name="Mandrell R.E."/>
        </authorList>
    </citation>
    <scope>NUCLEOTIDE SEQUENCE [LARGE SCALE GENOMIC DNA]</scope>
    <source>
        <strain>RM4018</strain>
    </source>
</reference>
<dbReference type="EMBL" id="CP000361">
    <property type="protein sequence ID" value="ABV67842.1"/>
    <property type="molecule type" value="Genomic_DNA"/>
</dbReference>
<dbReference type="RefSeq" id="WP_004509826.1">
    <property type="nucleotide sequence ID" value="NC_009850.1"/>
</dbReference>
<dbReference type="SMR" id="A8EV69"/>
<dbReference type="STRING" id="367737.Abu_1594"/>
<dbReference type="GeneID" id="24303973"/>
<dbReference type="KEGG" id="abu:Abu_1594"/>
<dbReference type="eggNOG" id="COG0355">
    <property type="taxonomic scope" value="Bacteria"/>
</dbReference>
<dbReference type="HOGENOM" id="CLU_084338_2_1_7"/>
<dbReference type="Proteomes" id="UP000001136">
    <property type="component" value="Chromosome"/>
</dbReference>
<dbReference type="GO" id="GO:0005886">
    <property type="term" value="C:plasma membrane"/>
    <property type="evidence" value="ECO:0007669"/>
    <property type="project" value="UniProtKB-SubCell"/>
</dbReference>
<dbReference type="GO" id="GO:0045259">
    <property type="term" value="C:proton-transporting ATP synthase complex"/>
    <property type="evidence" value="ECO:0007669"/>
    <property type="project" value="UniProtKB-KW"/>
</dbReference>
<dbReference type="GO" id="GO:0005524">
    <property type="term" value="F:ATP binding"/>
    <property type="evidence" value="ECO:0007669"/>
    <property type="project" value="UniProtKB-UniRule"/>
</dbReference>
<dbReference type="GO" id="GO:0046933">
    <property type="term" value="F:proton-transporting ATP synthase activity, rotational mechanism"/>
    <property type="evidence" value="ECO:0007669"/>
    <property type="project" value="UniProtKB-UniRule"/>
</dbReference>
<dbReference type="CDD" id="cd12152">
    <property type="entry name" value="F1-ATPase_delta"/>
    <property type="match status" value="1"/>
</dbReference>
<dbReference type="Gene3D" id="2.60.15.10">
    <property type="entry name" value="F0F1 ATP synthase delta/epsilon subunit, N-terminal"/>
    <property type="match status" value="1"/>
</dbReference>
<dbReference type="HAMAP" id="MF_00530">
    <property type="entry name" value="ATP_synth_epsil_bac"/>
    <property type="match status" value="1"/>
</dbReference>
<dbReference type="InterPro" id="IPR001469">
    <property type="entry name" value="ATP_synth_F1_dsu/esu"/>
</dbReference>
<dbReference type="InterPro" id="IPR020546">
    <property type="entry name" value="ATP_synth_F1_dsu/esu_N"/>
</dbReference>
<dbReference type="InterPro" id="IPR036771">
    <property type="entry name" value="ATPsynth_dsu/esu_N"/>
</dbReference>
<dbReference type="NCBIfam" id="TIGR01216">
    <property type="entry name" value="ATP_synt_epsi"/>
    <property type="match status" value="1"/>
</dbReference>
<dbReference type="PANTHER" id="PTHR13822">
    <property type="entry name" value="ATP SYNTHASE DELTA/EPSILON CHAIN"/>
    <property type="match status" value="1"/>
</dbReference>
<dbReference type="PANTHER" id="PTHR13822:SF10">
    <property type="entry name" value="ATP SYNTHASE EPSILON CHAIN, CHLOROPLASTIC"/>
    <property type="match status" value="1"/>
</dbReference>
<dbReference type="Pfam" id="PF02823">
    <property type="entry name" value="ATP-synt_DE_N"/>
    <property type="match status" value="1"/>
</dbReference>
<dbReference type="SUPFAM" id="SSF51344">
    <property type="entry name" value="Epsilon subunit of F1F0-ATP synthase N-terminal domain"/>
    <property type="match status" value="1"/>
</dbReference>
<name>ATPE_ALIB4</name>
<proteinExistence type="inferred from homology"/>
<evidence type="ECO:0000255" key="1">
    <source>
        <dbReference type="HAMAP-Rule" id="MF_00530"/>
    </source>
</evidence>
<sequence length="125" mass="13003">MDTIKLSIVTPNGEIFNDDVKTVTLPGKEGEFGVLPGHSSLVSSLTVGVIVIEKVDSTEAVAINWGHVKVDEKSVDVLADGAIALTAGKDSEIAKNIEAAKELVNSVKDSNISVAAVEAKINSFA</sequence>
<gene>
    <name evidence="1" type="primary">atpC</name>
    <name type="ordered locus">Abu_1594</name>
</gene>
<feature type="chain" id="PRO_1000060976" description="ATP synthase epsilon chain">
    <location>
        <begin position="1"/>
        <end position="125"/>
    </location>
</feature>
<organism>
    <name type="scientific">Aliarcobacter butzleri (strain RM4018)</name>
    <name type="common">Arcobacter butzleri</name>
    <dbReference type="NCBI Taxonomy" id="367737"/>
    <lineage>
        <taxon>Bacteria</taxon>
        <taxon>Pseudomonadati</taxon>
        <taxon>Campylobacterota</taxon>
        <taxon>Epsilonproteobacteria</taxon>
        <taxon>Campylobacterales</taxon>
        <taxon>Arcobacteraceae</taxon>
        <taxon>Aliarcobacter</taxon>
    </lineage>
</organism>
<keyword id="KW-0066">ATP synthesis</keyword>
<keyword id="KW-0997">Cell inner membrane</keyword>
<keyword id="KW-1003">Cell membrane</keyword>
<keyword id="KW-0139">CF(1)</keyword>
<keyword id="KW-0375">Hydrogen ion transport</keyword>
<keyword id="KW-0406">Ion transport</keyword>
<keyword id="KW-0472">Membrane</keyword>
<keyword id="KW-1185">Reference proteome</keyword>
<keyword id="KW-0813">Transport</keyword>
<protein>
    <recommendedName>
        <fullName evidence="1">ATP synthase epsilon chain</fullName>
    </recommendedName>
    <alternativeName>
        <fullName evidence="1">ATP synthase F1 sector epsilon subunit</fullName>
    </alternativeName>
    <alternativeName>
        <fullName evidence="1">F-ATPase epsilon subunit</fullName>
    </alternativeName>
</protein>
<accession>A8EV69</accession>